<feature type="chain" id="PRO_0000383790" description="Structure-specific endonuclease subunit SLX1">
    <location>
        <begin position="1"/>
        <end position="444"/>
    </location>
</feature>
<feature type="domain" description="GIY-YIG" evidence="1">
    <location>
        <begin position="23"/>
        <end position="105"/>
    </location>
</feature>
<feature type="zinc finger region" description="SLX1-type" evidence="1">
    <location>
        <begin position="240"/>
        <end position="295"/>
    </location>
</feature>
<feature type="region of interest" description="Disordered" evidence="2">
    <location>
        <begin position="324"/>
        <end position="354"/>
    </location>
</feature>
<dbReference type="EC" id="3.1.-.-" evidence="1"/>
<dbReference type="EMBL" id="KN294001">
    <property type="protein sequence ID" value="EEH33245.2"/>
    <property type="molecule type" value="Genomic_DNA"/>
</dbReference>
<dbReference type="RefSeq" id="XP_015699456.1">
    <property type="nucleotide sequence ID" value="XM_015845230.1"/>
</dbReference>
<dbReference type="SMR" id="C1H0K4"/>
<dbReference type="STRING" id="502779.C1H0K4"/>
<dbReference type="GeneID" id="9097167"/>
<dbReference type="KEGG" id="pbl:PAAG_04298"/>
<dbReference type="VEuPathDB" id="FungiDB:PAAG_04298"/>
<dbReference type="HOGENOM" id="CLU_030739_1_0_1"/>
<dbReference type="OMA" id="HNRGCDF"/>
<dbReference type="OrthoDB" id="24645at2759"/>
<dbReference type="Proteomes" id="UP000002059">
    <property type="component" value="Partially assembled WGS sequence"/>
</dbReference>
<dbReference type="GO" id="GO:0033557">
    <property type="term" value="C:Slx1-Slx4 complex"/>
    <property type="evidence" value="ECO:0007669"/>
    <property type="project" value="UniProtKB-UniRule"/>
</dbReference>
<dbReference type="GO" id="GO:0017108">
    <property type="term" value="F:5'-flap endonuclease activity"/>
    <property type="evidence" value="ECO:0007669"/>
    <property type="project" value="InterPro"/>
</dbReference>
<dbReference type="GO" id="GO:0008821">
    <property type="term" value="F:crossover junction DNA endonuclease activity"/>
    <property type="evidence" value="ECO:0007669"/>
    <property type="project" value="TreeGrafter"/>
</dbReference>
<dbReference type="GO" id="GO:0008270">
    <property type="term" value="F:zinc ion binding"/>
    <property type="evidence" value="ECO:0007669"/>
    <property type="project" value="UniProtKB-KW"/>
</dbReference>
<dbReference type="GO" id="GO:0000724">
    <property type="term" value="P:double-strand break repair via homologous recombination"/>
    <property type="evidence" value="ECO:0007669"/>
    <property type="project" value="TreeGrafter"/>
</dbReference>
<dbReference type="CDD" id="cd10455">
    <property type="entry name" value="GIY-YIG_SLX1"/>
    <property type="match status" value="1"/>
</dbReference>
<dbReference type="Gene3D" id="3.40.1440.10">
    <property type="entry name" value="GIY-YIG endonuclease"/>
    <property type="match status" value="1"/>
</dbReference>
<dbReference type="Gene3D" id="3.30.40.10">
    <property type="entry name" value="Zinc/RING finger domain, C3HC4 (zinc finger)"/>
    <property type="match status" value="1"/>
</dbReference>
<dbReference type="HAMAP" id="MF_03100">
    <property type="entry name" value="Endonuc_su_Slx1"/>
    <property type="match status" value="1"/>
</dbReference>
<dbReference type="InterPro" id="IPR000305">
    <property type="entry name" value="GIY-YIG_endonuc"/>
</dbReference>
<dbReference type="InterPro" id="IPR035901">
    <property type="entry name" value="GIY-YIG_endonuc_sf"/>
</dbReference>
<dbReference type="InterPro" id="IPR027520">
    <property type="entry name" value="Slx1"/>
</dbReference>
<dbReference type="InterPro" id="IPR048749">
    <property type="entry name" value="SLX1_C"/>
</dbReference>
<dbReference type="InterPro" id="IPR050381">
    <property type="entry name" value="SLX1_endonuclease"/>
</dbReference>
<dbReference type="InterPro" id="IPR013083">
    <property type="entry name" value="Znf_RING/FYVE/PHD"/>
</dbReference>
<dbReference type="PANTHER" id="PTHR20208">
    <property type="entry name" value="STRUCTURE-SPECIFIC ENDONUCLEASE SUBUNIT SLX1"/>
    <property type="match status" value="1"/>
</dbReference>
<dbReference type="PANTHER" id="PTHR20208:SF10">
    <property type="entry name" value="STRUCTURE-SPECIFIC ENDONUCLEASE SUBUNIT SLX1"/>
    <property type="match status" value="1"/>
</dbReference>
<dbReference type="Pfam" id="PF01541">
    <property type="entry name" value="GIY-YIG"/>
    <property type="match status" value="1"/>
</dbReference>
<dbReference type="Pfam" id="PF21202">
    <property type="entry name" value="SLX1_C"/>
    <property type="match status" value="1"/>
</dbReference>
<dbReference type="SUPFAM" id="SSF82771">
    <property type="entry name" value="GIY-YIG endonuclease"/>
    <property type="match status" value="1"/>
</dbReference>
<dbReference type="PROSITE" id="PS50164">
    <property type="entry name" value="GIY_YIG"/>
    <property type="match status" value="1"/>
</dbReference>
<accession>C1H0K4</accession>
<sequence>MAPSIQSLSMIHDSQECIKPIPAFSCCYLLRSCVRHASLYIGSTPDPARRLAQHNGDRYGAAKRTLRENLRPWEMVAIVSGFTSRVAALQFEWAWQNTKVSRHADLDGNATQELGVRICPRTAKEVKRVAKPRTSLTNILANLHLLLRSPYFSKWPIEVRFFSADVHRVWQVWLQRVDGLLNDGIRVVTDFAPDGISEVEGKELLAGAGRVGTLDVGYNSIKEYVEKSQFLLEDGERINCGVCKQRLILQHDIIAVCSHSSCHCAAHLSCLSSHFLKDKDSDSELVPREGTCPTCYSKLEWLTMMKEISLRLRGQAEVNRLFGRRQRAGTPKGQGLKSVRGRGHSEDENESDALQVSTGLDTVNLPPCSDGPWTIDCAIGVLGGIAHRPGGVSSGNDSDATVTPEIETHPQRCRRNQNTRTQRLGLQKSAMINLSDWYDAEVIE</sequence>
<proteinExistence type="inferred from homology"/>
<gene>
    <name evidence="1" type="primary">SLX1</name>
    <name type="ORF">PAAG_04298</name>
</gene>
<protein>
    <recommendedName>
        <fullName evidence="1">Structure-specific endonuclease subunit SLX1</fullName>
        <ecNumber evidence="1">3.1.-.-</ecNumber>
    </recommendedName>
</protein>
<name>SLX1_PARBA</name>
<keyword id="KW-0227">DNA damage</keyword>
<keyword id="KW-0233">DNA recombination</keyword>
<keyword id="KW-0234">DNA repair</keyword>
<keyword id="KW-0255">Endonuclease</keyword>
<keyword id="KW-0378">Hydrolase</keyword>
<keyword id="KW-0479">Metal-binding</keyword>
<keyword id="KW-0540">Nuclease</keyword>
<keyword id="KW-0539">Nucleus</keyword>
<keyword id="KW-1185">Reference proteome</keyword>
<keyword id="KW-0862">Zinc</keyword>
<keyword id="KW-0863">Zinc-finger</keyword>
<reference key="1">
    <citation type="journal article" date="2011" name="PLoS Genet.">
        <title>Comparative genomic analysis of human fungal pathogens causing paracoccidioidomycosis.</title>
        <authorList>
            <person name="Desjardins C.A."/>
            <person name="Champion M.D."/>
            <person name="Holder J.W."/>
            <person name="Muszewska A."/>
            <person name="Goldberg J."/>
            <person name="Bailao A.M."/>
            <person name="Brigido M.M."/>
            <person name="Ferreira M.E."/>
            <person name="Garcia A.M."/>
            <person name="Grynberg M."/>
            <person name="Gujja S."/>
            <person name="Heiman D.I."/>
            <person name="Henn M.R."/>
            <person name="Kodira C.D."/>
            <person name="Leon-Narvaez H."/>
            <person name="Longo L.V.G."/>
            <person name="Ma L.-J."/>
            <person name="Malavazi I."/>
            <person name="Matsuo A.L."/>
            <person name="Morais F.V."/>
            <person name="Pereira M."/>
            <person name="Rodriguez-Brito S."/>
            <person name="Sakthikumar S."/>
            <person name="Salem-Izacc S.M."/>
            <person name="Sykes S.M."/>
            <person name="Teixeira M.M."/>
            <person name="Vallejo M.C."/>
            <person name="Walter M.E."/>
            <person name="Yandava C."/>
            <person name="Young S."/>
            <person name="Zeng Q."/>
            <person name="Zucker J."/>
            <person name="Felipe M.S."/>
            <person name="Goldman G.H."/>
            <person name="Haas B.J."/>
            <person name="McEwen J.G."/>
            <person name="Nino-Vega G."/>
            <person name="Puccia R."/>
            <person name="San-Blas G."/>
            <person name="Soares C.M."/>
            <person name="Birren B.W."/>
            <person name="Cuomo C.A."/>
        </authorList>
    </citation>
    <scope>NUCLEOTIDE SEQUENCE [LARGE SCALE GENOMIC DNA]</scope>
    <source>
        <strain>ATCC MYA-826 / Pb01</strain>
    </source>
</reference>
<evidence type="ECO:0000255" key="1">
    <source>
        <dbReference type="HAMAP-Rule" id="MF_03100"/>
    </source>
</evidence>
<evidence type="ECO:0000256" key="2">
    <source>
        <dbReference type="SAM" id="MobiDB-lite"/>
    </source>
</evidence>
<organism>
    <name type="scientific">Paracoccidioides lutzii (strain ATCC MYA-826 / Pb01)</name>
    <name type="common">Paracoccidioides brasiliensis</name>
    <dbReference type="NCBI Taxonomy" id="502779"/>
    <lineage>
        <taxon>Eukaryota</taxon>
        <taxon>Fungi</taxon>
        <taxon>Dikarya</taxon>
        <taxon>Ascomycota</taxon>
        <taxon>Pezizomycotina</taxon>
        <taxon>Eurotiomycetes</taxon>
        <taxon>Eurotiomycetidae</taxon>
        <taxon>Onygenales</taxon>
        <taxon>Ajellomycetaceae</taxon>
        <taxon>Paracoccidioides</taxon>
    </lineage>
</organism>
<comment type="function">
    <text evidence="1">Catalytic subunit of the SLX1-SLX4 structure-specific endonuclease that resolves DNA secondary structures generated during DNA repair and recombination. Has endonuclease activity towards branched DNA substrates, introducing single-strand cuts in duplex DNA close to junctions with ss-DNA.</text>
</comment>
<comment type="cofactor">
    <cofactor evidence="1">
        <name>a divalent metal cation</name>
        <dbReference type="ChEBI" id="CHEBI:60240"/>
    </cofactor>
</comment>
<comment type="subunit">
    <text evidence="1">Forms a heterodimer with SLX4.</text>
</comment>
<comment type="subcellular location">
    <subcellularLocation>
        <location evidence="1">Nucleus</location>
    </subcellularLocation>
</comment>
<comment type="similarity">
    <text evidence="1">Belongs to the SLX1 family.</text>
</comment>